<dbReference type="EMBL" id="BC077408">
    <property type="protein sequence ID" value="AAH77408.1"/>
    <property type="molecule type" value="mRNA"/>
</dbReference>
<dbReference type="DNASU" id="446596"/>
<dbReference type="GeneID" id="446596"/>
<dbReference type="KEGG" id="xla:446596"/>
<dbReference type="AGR" id="Xenbase:XB-GENE-6256678"/>
<dbReference type="CTD" id="446596"/>
<dbReference type="Xenbase" id="XB-GENE-6256678">
    <property type="gene designation" value="rbm5.S"/>
</dbReference>
<dbReference type="OMA" id="FYNEPQK"/>
<dbReference type="OrthoDB" id="29221at2759"/>
<dbReference type="Proteomes" id="UP000186698">
    <property type="component" value="Chromosome 4S"/>
</dbReference>
<dbReference type="Bgee" id="446596">
    <property type="expression patterns" value="Expressed in brain and 19 other cell types or tissues"/>
</dbReference>
<dbReference type="GO" id="GO:0005634">
    <property type="term" value="C:nucleus"/>
    <property type="evidence" value="ECO:0000250"/>
    <property type="project" value="UniProtKB"/>
</dbReference>
<dbReference type="GO" id="GO:0005681">
    <property type="term" value="C:spliceosomal complex"/>
    <property type="evidence" value="ECO:0007669"/>
    <property type="project" value="UniProtKB-KW"/>
</dbReference>
<dbReference type="GO" id="GO:0003729">
    <property type="term" value="F:mRNA binding"/>
    <property type="evidence" value="ECO:0000250"/>
    <property type="project" value="UniProtKB"/>
</dbReference>
<dbReference type="GO" id="GO:0003723">
    <property type="term" value="F:RNA binding"/>
    <property type="evidence" value="ECO:0000318"/>
    <property type="project" value="GO_Central"/>
</dbReference>
<dbReference type="GO" id="GO:0008270">
    <property type="term" value="F:zinc ion binding"/>
    <property type="evidence" value="ECO:0007669"/>
    <property type="project" value="UniProtKB-KW"/>
</dbReference>
<dbReference type="GO" id="GO:0000398">
    <property type="term" value="P:mRNA splicing, via spliceosome"/>
    <property type="evidence" value="ECO:0000318"/>
    <property type="project" value="GO_Central"/>
</dbReference>
<dbReference type="GO" id="GO:0043065">
    <property type="term" value="P:positive regulation of apoptotic process"/>
    <property type="evidence" value="ECO:0000250"/>
    <property type="project" value="UniProtKB"/>
</dbReference>
<dbReference type="GO" id="GO:0000381">
    <property type="term" value="P:regulation of alternative mRNA splicing, via spliceosome"/>
    <property type="evidence" value="ECO:0000250"/>
    <property type="project" value="UniProtKB"/>
</dbReference>
<dbReference type="GO" id="GO:0000245">
    <property type="term" value="P:spliceosomal complex assembly"/>
    <property type="evidence" value="ECO:0000250"/>
    <property type="project" value="UniProtKB"/>
</dbReference>
<dbReference type="CDD" id="cd12752">
    <property type="entry name" value="RRM1_RBM5"/>
    <property type="match status" value="1"/>
</dbReference>
<dbReference type="CDD" id="cd12755">
    <property type="entry name" value="RRM2_RBM5"/>
    <property type="match status" value="1"/>
</dbReference>
<dbReference type="FunFam" id="3.30.70.330:FF:000110">
    <property type="entry name" value="RNA-binding protein 10 isoform X1"/>
    <property type="match status" value="1"/>
</dbReference>
<dbReference type="FunFam" id="3.30.70.330:FF:000114">
    <property type="entry name" value="RNA-binding protein 10 isoform X1"/>
    <property type="match status" value="1"/>
</dbReference>
<dbReference type="FunFam" id="4.10.1060.10:FF:000005">
    <property type="entry name" value="RNA-binding protein 10 isoform X2"/>
    <property type="match status" value="1"/>
</dbReference>
<dbReference type="Gene3D" id="3.30.70.330">
    <property type="match status" value="2"/>
</dbReference>
<dbReference type="Gene3D" id="4.10.1060.10">
    <property type="entry name" value="Zinc finger, RanBP2-type"/>
    <property type="match status" value="1"/>
</dbReference>
<dbReference type="InterPro" id="IPR000467">
    <property type="entry name" value="G_patch_dom"/>
</dbReference>
<dbReference type="InterPro" id="IPR012677">
    <property type="entry name" value="Nucleotide-bd_a/b_plait_sf"/>
</dbReference>
<dbReference type="InterPro" id="IPR041591">
    <property type="entry name" value="OCRE"/>
</dbReference>
<dbReference type="InterPro" id="IPR035979">
    <property type="entry name" value="RBD_domain_sf"/>
</dbReference>
<dbReference type="InterPro" id="IPR034991">
    <property type="entry name" value="RBM5_RRM1"/>
</dbReference>
<dbReference type="InterPro" id="IPR034993">
    <property type="entry name" value="RBM5_RRM2"/>
</dbReference>
<dbReference type="InterPro" id="IPR000504">
    <property type="entry name" value="RRM_dom"/>
</dbReference>
<dbReference type="InterPro" id="IPR001876">
    <property type="entry name" value="Znf_RanBP2"/>
</dbReference>
<dbReference type="InterPro" id="IPR036443">
    <property type="entry name" value="Znf_RanBP2_sf"/>
</dbReference>
<dbReference type="PANTHER" id="PTHR13948">
    <property type="entry name" value="RNA-BINDING PROTEIN"/>
    <property type="match status" value="1"/>
</dbReference>
<dbReference type="PANTHER" id="PTHR13948:SF21">
    <property type="entry name" value="RNA-BINDING PROTEIN 5"/>
    <property type="match status" value="1"/>
</dbReference>
<dbReference type="Pfam" id="PF01585">
    <property type="entry name" value="G-patch"/>
    <property type="match status" value="1"/>
</dbReference>
<dbReference type="Pfam" id="PF17780">
    <property type="entry name" value="OCRE"/>
    <property type="match status" value="1"/>
</dbReference>
<dbReference type="Pfam" id="PF00076">
    <property type="entry name" value="RRM_1"/>
    <property type="match status" value="1"/>
</dbReference>
<dbReference type="Pfam" id="PF00641">
    <property type="entry name" value="Zn_ribbon_RanBP"/>
    <property type="match status" value="1"/>
</dbReference>
<dbReference type="SMART" id="SM00443">
    <property type="entry name" value="G_patch"/>
    <property type="match status" value="1"/>
</dbReference>
<dbReference type="SMART" id="SM00360">
    <property type="entry name" value="RRM"/>
    <property type="match status" value="2"/>
</dbReference>
<dbReference type="SMART" id="SM00547">
    <property type="entry name" value="ZnF_RBZ"/>
    <property type="match status" value="1"/>
</dbReference>
<dbReference type="SUPFAM" id="SSF90209">
    <property type="entry name" value="Ran binding protein zinc finger-like"/>
    <property type="match status" value="1"/>
</dbReference>
<dbReference type="SUPFAM" id="SSF54928">
    <property type="entry name" value="RNA-binding domain, RBD"/>
    <property type="match status" value="2"/>
</dbReference>
<dbReference type="PROSITE" id="PS50174">
    <property type="entry name" value="G_PATCH"/>
    <property type="match status" value="1"/>
</dbReference>
<dbReference type="PROSITE" id="PS50102">
    <property type="entry name" value="RRM"/>
    <property type="match status" value="2"/>
</dbReference>
<dbReference type="PROSITE" id="PS01358">
    <property type="entry name" value="ZF_RANBP2_1"/>
    <property type="match status" value="1"/>
</dbReference>
<dbReference type="PROSITE" id="PS50199">
    <property type="entry name" value="ZF_RANBP2_2"/>
    <property type="match status" value="1"/>
</dbReference>
<reference key="1">
    <citation type="submission" date="2004-07" db="EMBL/GenBank/DDBJ databases">
        <authorList>
            <consortium name="NIH - Xenopus Gene Collection (XGC) project"/>
        </authorList>
    </citation>
    <scope>NUCLEOTIDE SEQUENCE [LARGE SCALE MRNA]</scope>
    <source>
        <tissue>Embryo</tissue>
    </source>
</reference>
<proteinExistence type="evidence at transcript level"/>
<gene>
    <name type="primary">rbm5-b</name>
</gene>
<sequence length="749" mass="84292">MGSDKRVSRSERSGRYGSAFDRDDRDDRDSRSRRRDSEYKRYRDERNDQYDDYRDYESPERERMRDRERRNSDRSEDGYHSDGDYMDHDYRQDYYMDEKESKTIMLRGLPININENDIRELVESFEGPQPADVRLMKRKTGLSRGFAFVEFYHLQDATRWMEANQKKLVIQGKTIAMHYSNPRPKFEDWLCNKCGLYNFRRRLKCFRCGAAKAESDMEAPSGSSETPQSADYYSDSGYVSSAIILRNIGPHTVVDSILSALAPYVSLVVSNIRLIKDKQTQQNRGFAFVQLPSALEASQLLQILQTLHPPLKIDGKTIGVDFAKSARKDLVLPDGHRVSAFSVASTAIAAAQWSATQPAQQSGEAGDYAYLQQGQEGNSNFGQCSQDYQPFYQTQTAAVDQDTAPQSEGSPVPATTSAVVCQSPQMYQQPGSPTQSGTSTAASTTPASTTSTEEATTPTAIVPGVKYSVPDTSTYQYDESSGYYYDPQTGLYYDPNSQYYYNSLTQQYLYWDGEKQTYLPAADGTGQSGAQPNGANPGTSKEGKEKKEKPKSKTAQQIAKDMERWAKSLNKQKENFKNSFQPLSSRDEERKESAAADAGFALFEKKQGALFERQFLPDMMMMMVNTEEEKPPNAKYRDRAAERREKYGIPEPPEPKRKRFDPTVVNYEQPTKDGIDNSNIGNKMLQAMGWKEGSGLGRKSQGITAPIQAQVRMRGAGLGAKGSSYGVNTSDSYKDAVKKAMFARFSEME</sequence>
<keyword id="KW-0479">Metal-binding</keyword>
<keyword id="KW-0507">mRNA processing</keyword>
<keyword id="KW-0508">mRNA splicing</keyword>
<keyword id="KW-0539">Nucleus</keyword>
<keyword id="KW-1185">Reference proteome</keyword>
<keyword id="KW-0677">Repeat</keyword>
<keyword id="KW-0694">RNA-binding</keyword>
<keyword id="KW-0747">Spliceosome</keyword>
<keyword id="KW-0862">Zinc</keyword>
<keyword id="KW-0863">Zinc-finger</keyword>
<name>RBM5B_XENLA</name>
<comment type="function">
    <text evidence="1">Component of the spliceosome A complex. Regulates alternative splicing of a number of mRNAs. May modulate splice site pairing after recruitment of the U1 and U2 snRNPs to the 5' and 3' splice sites of the intron (By similarity).</text>
</comment>
<comment type="subunit">
    <text evidence="1">Component of the spliceosome A complex (also known as the prespliceosome). Appears to dissociate from the spliceosome upon formation of the spliceosome B complex (also known as the precatalytic spliceosome), in which the heterotrimeric U4/U6.U5 snRNPs are bound (By similarity).</text>
</comment>
<comment type="subcellular location">
    <subcellularLocation>
        <location evidence="1">Nucleus</location>
    </subcellularLocation>
</comment>
<comment type="similarity">
    <text evidence="6">Belongs to the RBM5/RBM10 family.</text>
</comment>
<protein>
    <recommendedName>
        <fullName>RNA-binding protein 5-B</fullName>
    </recommendedName>
    <alternativeName>
        <fullName>RNA-binding motif protein 5-B</fullName>
    </alternativeName>
</protein>
<organism>
    <name type="scientific">Xenopus laevis</name>
    <name type="common">African clawed frog</name>
    <dbReference type="NCBI Taxonomy" id="8355"/>
    <lineage>
        <taxon>Eukaryota</taxon>
        <taxon>Metazoa</taxon>
        <taxon>Chordata</taxon>
        <taxon>Craniata</taxon>
        <taxon>Vertebrata</taxon>
        <taxon>Euteleostomi</taxon>
        <taxon>Amphibia</taxon>
        <taxon>Batrachia</taxon>
        <taxon>Anura</taxon>
        <taxon>Pipoidea</taxon>
        <taxon>Pipidae</taxon>
        <taxon>Xenopodinae</taxon>
        <taxon>Xenopus</taxon>
        <taxon>Xenopus</taxon>
    </lineage>
</organism>
<feature type="chain" id="PRO_0000376807" description="RNA-binding protein 5-B">
    <location>
        <begin position="1"/>
        <end position="749"/>
    </location>
</feature>
<feature type="domain" description="RRM 1" evidence="3">
    <location>
        <begin position="102"/>
        <end position="182"/>
    </location>
</feature>
<feature type="domain" description="RRM 2" evidence="3">
    <location>
        <begin position="241"/>
        <end position="325"/>
    </location>
</feature>
<feature type="domain" description="G-patch" evidence="2">
    <location>
        <begin position="677"/>
        <end position="723"/>
    </location>
</feature>
<feature type="zinc finger region" description="RanBP2-type" evidence="4">
    <location>
        <begin position="185"/>
        <end position="214"/>
    </location>
</feature>
<feature type="region of interest" description="Disordered" evidence="5">
    <location>
        <begin position="1"/>
        <end position="88"/>
    </location>
</feature>
<feature type="region of interest" description="Disordered" evidence="5">
    <location>
        <begin position="425"/>
        <end position="471"/>
    </location>
</feature>
<feature type="region of interest" description="Disordered" evidence="5">
    <location>
        <begin position="520"/>
        <end position="558"/>
    </location>
</feature>
<feature type="region of interest" description="Disordered" evidence="5">
    <location>
        <begin position="570"/>
        <end position="595"/>
    </location>
</feature>
<feature type="region of interest" description="Disordered" evidence="5">
    <location>
        <begin position="626"/>
        <end position="680"/>
    </location>
</feature>
<feature type="compositionally biased region" description="Low complexity" evidence="5">
    <location>
        <begin position="429"/>
        <end position="460"/>
    </location>
</feature>
<feature type="compositionally biased region" description="Basic and acidic residues" evidence="5">
    <location>
        <begin position="585"/>
        <end position="594"/>
    </location>
</feature>
<feature type="compositionally biased region" description="Basic and acidic residues" evidence="5">
    <location>
        <begin position="627"/>
        <end position="648"/>
    </location>
</feature>
<accession>Q6DDU9</accession>
<evidence type="ECO:0000250" key="1"/>
<evidence type="ECO:0000255" key="2">
    <source>
        <dbReference type="PROSITE-ProRule" id="PRU00092"/>
    </source>
</evidence>
<evidence type="ECO:0000255" key="3">
    <source>
        <dbReference type="PROSITE-ProRule" id="PRU00176"/>
    </source>
</evidence>
<evidence type="ECO:0000255" key="4">
    <source>
        <dbReference type="PROSITE-ProRule" id="PRU00322"/>
    </source>
</evidence>
<evidence type="ECO:0000256" key="5">
    <source>
        <dbReference type="SAM" id="MobiDB-lite"/>
    </source>
</evidence>
<evidence type="ECO:0000305" key="6"/>